<protein>
    <recommendedName>
        <fullName>Apolipoprotein C-I</fullName>
        <shortName>Apo-CI</shortName>
        <shortName>ApoC-I</shortName>
    </recommendedName>
    <alternativeName>
        <fullName>Apolipoprotein C1</fullName>
    </alternativeName>
    <component>
        <recommendedName>
            <fullName>Truncated apolipoprotein C-I</fullName>
        </recommendedName>
    </component>
</protein>
<gene>
    <name type="primary">APOC1</name>
</gene>
<proteinExistence type="inferred from homology"/>
<comment type="function">
    <text evidence="1 2">Inhibitor of lipoprotein binding to the low density lipoprotein (LDL) receptor, LDL receptor-related protein, and very low density lipoprotein (VLDL) receptor. Associates with high density lipoproteins (HDL) and the triacylglycerol-rich lipoproteins in the plasma and makes up about 10% of the protein of the VLDL and 2% of that of HDL. Appears to interfere directly with fatty acid uptake and is also the major plasma inhibitor of cholesteryl ester transfer protein (CETP). Binds free fatty acids and reduces their intracellular esterification. Modulates the interaction of APOE with beta-migrating VLDL and inhibits binding of beta-VLDL to the LDL receptor-related protein.</text>
</comment>
<comment type="subcellular location">
    <subcellularLocation>
        <location evidence="1">Secreted</location>
    </subcellularLocation>
</comment>
<comment type="similarity">
    <text evidence="5">Belongs to the apolipoprotein C1 family.</text>
</comment>
<organism>
    <name type="scientific">Ailurus fulgens</name>
    <name type="common">Himalayan red panda</name>
    <dbReference type="NCBI Taxonomy" id="9649"/>
    <lineage>
        <taxon>Eukaryota</taxon>
        <taxon>Metazoa</taxon>
        <taxon>Chordata</taxon>
        <taxon>Craniata</taxon>
        <taxon>Vertebrata</taxon>
        <taxon>Euteleostomi</taxon>
        <taxon>Mammalia</taxon>
        <taxon>Eutheria</taxon>
        <taxon>Laurasiatheria</taxon>
        <taxon>Carnivora</taxon>
        <taxon>Caniformia</taxon>
        <taxon>Musteloidea</taxon>
        <taxon>Ailuridae</taxon>
        <taxon>Ailurus</taxon>
    </lineage>
</organism>
<dbReference type="EMBL" id="LNAC01000000">
    <property type="status" value="NOT_ANNOTATED_CDS"/>
    <property type="molecule type" value="Genomic_DNA"/>
</dbReference>
<dbReference type="SMR" id="P0DPG8"/>
<dbReference type="GO" id="GO:0034364">
    <property type="term" value="C:high-density lipoprotein particle"/>
    <property type="evidence" value="ECO:0007669"/>
    <property type="project" value="TreeGrafter"/>
</dbReference>
<dbReference type="GO" id="GO:0034361">
    <property type="term" value="C:very-low-density lipoprotein particle"/>
    <property type="evidence" value="ECO:0007669"/>
    <property type="project" value="UniProtKB-KW"/>
</dbReference>
<dbReference type="GO" id="GO:0005504">
    <property type="term" value="F:fatty acid binding"/>
    <property type="evidence" value="ECO:0007669"/>
    <property type="project" value="TreeGrafter"/>
</dbReference>
<dbReference type="GO" id="GO:0004859">
    <property type="term" value="F:phospholipase inhibitor activity"/>
    <property type="evidence" value="ECO:0007669"/>
    <property type="project" value="TreeGrafter"/>
</dbReference>
<dbReference type="GO" id="GO:0006869">
    <property type="term" value="P:lipid transport"/>
    <property type="evidence" value="ECO:0007669"/>
    <property type="project" value="UniProtKB-KW"/>
</dbReference>
<dbReference type="GO" id="GO:0042157">
    <property type="term" value="P:lipoprotein metabolic process"/>
    <property type="evidence" value="ECO:0007669"/>
    <property type="project" value="InterPro"/>
</dbReference>
<dbReference type="GO" id="GO:0032375">
    <property type="term" value="P:negative regulation of cholesterol transport"/>
    <property type="evidence" value="ECO:0007669"/>
    <property type="project" value="TreeGrafter"/>
</dbReference>
<dbReference type="GO" id="GO:0050995">
    <property type="term" value="P:negative regulation of lipid catabolic process"/>
    <property type="evidence" value="ECO:0007669"/>
    <property type="project" value="TreeGrafter"/>
</dbReference>
<dbReference type="GO" id="GO:0010916">
    <property type="term" value="P:negative regulation of very-low-density lipoprotein particle clearance"/>
    <property type="evidence" value="ECO:0007669"/>
    <property type="project" value="TreeGrafter"/>
</dbReference>
<dbReference type="GO" id="GO:0006641">
    <property type="term" value="P:triglyceride metabolic process"/>
    <property type="evidence" value="ECO:0007669"/>
    <property type="project" value="TreeGrafter"/>
</dbReference>
<dbReference type="GO" id="GO:0034447">
    <property type="term" value="P:very-low-density lipoprotein particle clearance"/>
    <property type="evidence" value="ECO:0007669"/>
    <property type="project" value="TreeGrafter"/>
</dbReference>
<dbReference type="Gene3D" id="4.10.260.30">
    <property type="entry name" value="Apolipoprotein C-I"/>
    <property type="match status" value="1"/>
</dbReference>
<dbReference type="InterPro" id="IPR043081">
    <property type="entry name" value="ApoC-1_sf"/>
</dbReference>
<dbReference type="InterPro" id="IPR006781">
    <property type="entry name" value="ApoC-I"/>
</dbReference>
<dbReference type="PANTHER" id="PTHR16565">
    <property type="entry name" value="APOLIPOPROTEIN C-I"/>
    <property type="match status" value="1"/>
</dbReference>
<dbReference type="PANTHER" id="PTHR16565:SF2">
    <property type="entry name" value="APOLIPOPROTEIN C-I"/>
    <property type="match status" value="1"/>
</dbReference>
<dbReference type="Pfam" id="PF04691">
    <property type="entry name" value="ApoC-I"/>
    <property type="match status" value="1"/>
</dbReference>
<keyword id="KW-0445">Lipid transport</keyword>
<keyword id="KW-0964">Secreted</keyword>
<keyword id="KW-0732">Signal</keyword>
<keyword id="KW-0813">Transport</keyword>
<keyword id="KW-0850">VLDL</keyword>
<sequence length="88" mass="9992">MRLFLSLPVLVVVLAMVLEGPAPAQAAPEISRTFERIPDKLKEFGNTLEDKAREVLETIKQSDIPAKTRNWFSETYNKVKEQLKTAFS</sequence>
<accession>P0DPG8</accession>
<reference key="1">
    <citation type="journal article" date="2017" name="Proc. Natl. Acad. Sci. U.S.A.">
        <title>Comparative genomics reveals convergent evolution between the bamboo-eating giant and red pandas.</title>
        <authorList>
            <person name="Hu Y."/>
            <person name="Wu Q."/>
            <person name="Ma S."/>
            <person name="Ma T."/>
            <person name="Shan L."/>
            <person name="Wang X."/>
            <person name="Nie Y."/>
            <person name="Ning Z."/>
            <person name="Yan L."/>
            <person name="Xiu Y."/>
            <person name="Wei F."/>
        </authorList>
    </citation>
    <scope>NUCLEOTIDE SEQUENCE [LARGE SCALE GENOMIC DNA]</scope>
</reference>
<reference key="2">
    <citation type="unpublished observations" date="2018-05">
        <authorList>
            <person name="Puppione D.L."/>
        </authorList>
    </citation>
    <scope>IDENTIFICATION</scope>
</reference>
<feature type="signal peptide" evidence="4">
    <location>
        <begin position="1"/>
        <end position="26"/>
    </location>
</feature>
<feature type="chain" id="PRO_0000444580" description="Apolipoprotein C-I">
    <location>
        <begin position="27"/>
        <end position="88"/>
    </location>
</feature>
<feature type="chain" id="PRO_0000444581" description="Truncated apolipoprotein C-I" evidence="3">
    <location>
        <begin position="29"/>
        <end position="88"/>
    </location>
</feature>
<evidence type="ECO:0000250" key="1">
    <source>
        <dbReference type="UniProtKB" id="P02654"/>
    </source>
</evidence>
<evidence type="ECO:0000250" key="2">
    <source>
        <dbReference type="UniProtKB" id="P33047"/>
    </source>
</evidence>
<evidence type="ECO:0000250" key="3">
    <source>
        <dbReference type="UniProtKB" id="P86336"/>
    </source>
</evidence>
<evidence type="ECO:0000255" key="4"/>
<evidence type="ECO:0000305" key="5"/>
<name>APOC1_AILFU</name>